<dbReference type="EMBL" id="CP000504">
    <property type="protein sequence ID" value="ABL88945.1"/>
    <property type="molecule type" value="Genomic_DNA"/>
</dbReference>
<dbReference type="SMR" id="A1RVG3"/>
<dbReference type="STRING" id="384616.Pisl_1796"/>
<dbReference type="KEGG" id="pis:Pisl_1796"/>
<dbReference type="eggNOG" id="arCOG04070">
    <property type="taxonomic scope" value="Archaea"/>
</dbReference>
<dbReference type="HOGENOM" id="CLU_033361_2_0_2"/>
<dbReference type="Proteomes" id="UP000002595">
    <property type="component" value="Chromosome"/>
</dbReference>
<dbReference type="GO" id="GO:0022625">
    <property type="term" value="C:cytosolic large ribosomal subunit"/>
    <property type="evidence" value="ECO:0007669"/>
    <property type="project" value="TreeGrafter"/>
</dbReference>
<dbReference type="GO" id="GO:0019843">
    <property type="term" value="F:rRNA binding"/>
    <property type="evidence" value="ECO:0007669"/>
    <property type="project" value="UniProtKB-UniRule"/>
</dbReference>
<dbReference type="GO" id="GO:0003735">
    <property type="term" value="F:structural constituent of ribosome"/>
    <property type="evidence" value="ECO:0007669"/>
    <property type="project" value="InterPro"/>
</dbReference>
<dbReference type="GO" id="GO:0006412">
    <property type="term" value="P:translation"/>
    <property type="evidence" value="ECO:0007669"/>
    <property type="project" value="UniProtKB-UniRule"/>
</dbReference>
<dbReference type="Gene3D" id="3.30.1430.10">
    <property type="match status" value="1"/>
</dbReference>
<dbReference type="Gene3D" id="4.10.960.10">
    <property type="entry name" value="Ribosomal protein L3, domain 3"/>
    <property type="match status" value="1"/>
</dbReference>
<dbReference type="Gene3D" id="2.40.30.10">
    <property type="entry name" value="Translation factors"/>
    <property type="match status" value="1"/>
</dbReference>
<dbReference type="HAMAP" id="MF_01325_A">
    <property type="entry name" value="Ribosomal_uL3_A"/>
    <property type="match status" value="1"/>
</dbReference>
<dbReference type="InterPro" id="IPR045077">
    <property type="entry name" value="L3_arc_euk"/>
</dbReference>
<dbReference type="InterPro" id="IPR044892">
    <property type="entry name" value="Ribosomal_L3_dom_3_arc_sf"/>
</dbReference>
<dbReference type="InterPro" id="IPR000597">
    <property type="entry name" value="Ribosomal_uL3"/>
</dbReference>
<dbReference type="InterPro" id="IPR019928">
    <property type="entry name" value="Ribosomal_uL3_arc"/>
</dbReference>
<dbReference type="InterPro" id="IPR019926">
    <property type="entry name" value="Ribosomal_uL3_CS"/>
</dbReference>
<dbReference type="InterPro" id="IPR009000">
    <property type="entry name" value="Transl_B-barrel_sf"/>
</dbReference>
<dbReference type="NCBIfam" id="TIGR03626">
    <property type="entry name" value="L3_arch"/>
    <property type="match status" value="1"/>
</dbReference>
<dbReference type="NCBIfam" id="NF003261">
    <property type="entry name" value="PRK04231.1"/>
    <property type="match status" value="1"/>
</dbReference>
<dbReference type="PANTHER" id="PTHR11363">
    <property type="entry name" value="60S RIBOSOMAL PROTEIN L3-RELATED"/>
    <property type="match status" value="1"/>
</dbReference>
<dbReference type="PANTHER" id="PTHR11363:SF5">
    <property type="entry name" value="LARGE RIBOSOMAL SUBUNIT PROTEIN UL3"/>
    <property type="match status" value="1"/>
</dbReference>
<dbReference type="Pfam" id="PF00297">
    <property type="entry name" value="Ribosomal_L3"/>
    <property type="match status" value="1"/>
</dbReference>
<dbReference type="SUPFAM" id="SSF50447">
    <property type="entry name" value="Translation proteins"/>
    <property type="match status" value="1"/>
</dbReference>
<dbReference type="PROSITE" id="PS00474">
    <property type="entry name" value="RIBOSOMAL_L3"/>
    <property type="match status" value="1"/>
</dbReference>
<keyword id="KW-0687">Ribonucleoprotein</keyword>
<keyword id="KW-0689">Ribosomal protein</keyword>
<keyword id="KW-0694">RNA-binding</keyword>
<keyword id="KW-0699">rRNA-binding</keyword>
<comment type="function">
    <text evidence="1">One of the primary rRNA binding proteins, it binds directly near the 3'-end of the 23S rRNA, where it nucleates assembly of the 50S subunit.</text>
</comment>
<comment type="subunit">
    <text evidence="1">Part of the 50S ribosomal subunit. Forms a cluster with proteins L14 and L24e.</text>
</comment>
<comment type="similarity">
    <text evidence="1">Belongs to the universal ribosomal protein uL3 family.</text>
</comment>
<name>RL3_PYRIL</name>
<evidence type="ECO:0000255" key="1">
    <source>
        <dbReference type="HAMAP-Rule" id="MF_01325"/>
    </source>
</evidence>
<evidence type="ECO:0000305" key="2"/>
<feature type="chain" id="PRO_0000353626" description="Large ribosomal subunit protein uL3">
    <location>
        <begin position="1"/>
        <end position="342"/>
    </location>
</feature>
<sequence length="342" mass="37902">MSRAMGLKINRPRRGSMGVYPRKRAADIVPRVRTWPEVNLGKPTLLGFAAYKAGMLHAVVVEDRPTSPLYGKEVVKAVTVLDAPPLFIWGFRLYTLDPTNGYKRSIAEVWAPELPAYLRRVLTLPEKVDVDKQMKKVEEFKDVAVDVRALVATQPHLSGIGKKTPELLEIPIGGVPSVDERIKFAVSLLGKTVSPKEVFTAGQLVDVIAVTKGKGYQGVIKRFGVTILPRWHKHRKGHRRTGTIGPQAPAVMFTQPRPGQMGFHQRTEYNKRIIKIGDNGAEITPKSGFLHYGVVKGPYILIQGTVPGARKRLVVLRYPVRPPKKAPPAAEPQVVWISSQSI</sequence>
<organism>
    <name type="scientific">Pyrobaculum islandicum (strain DSM 4184 / JCM 9189 / GEO3)</name>
    <dbReference type="NCBI Taxonomy" id="384616"/>
    <lineage>
        <taxon>Archaea</taxon>
        <taxon>Thermoproteota</taxon>
        <taxon>Thermoprotei</taxon>
        <taxon>Thermoproteales</taxon>
        <taxon>Thermoproteaceae</taxon>
        <taxon>Pyrobaculum</taxon>
    </lineage>
</organism>
<accession>A1RVG3</accession>
<reference key="1">
    <citation type="submission" date="2006-12" db="EMBL/GenBank/DDBJ databases">
        <title>Complete sequence of Pyrobaculum islandicum DSM 4184.</title>
        <authorList>
            <person name="Copeland A."/>
            <person name="Lucas S."/>
            <person name="Lapidus A."/>
            <person name="Barry K."/>
            <person name="Detter J.C."/>
            <person name="Glavina del Rio T."/>
            <person name="Dalin E."/>
            <person name="Tice H."/>
            <person name="Pitluck S."/>
            <person name="Meincke L."/>
            <person name="Brettin T."/>
            <person name="Bruce D."/>
            <person name="Han C."/>
            <person name="Tapia R."/>
            <person name="Gilna P."/>
            <person name="Schmutz J."/>
            <person name="Larimer F."/>
            <person name="Land M."/>
            <person name="Hauser L."/>
            <person name="Kyrpides N."/>
            <person name="Mikhailova N."/>
            <person name="Cozen A.E."/>
            <person name="Fitz-Gibbon S.T."/>
            <person name="House C.H."/>
            <person name="Saltikov C."/>
            <person name="Lowe T."/>
            <person name="Richardson P."/>
        </authorList>
    </citation>
    <scope>NUCLEOTIDE SEQUENCE [LARGE SCALE GENOMIC DNA]</scope>
    <source>
        <strain>DSM 4184 / JCM 9189 / GEO3</strain>
    </source>
</reference>
<protein>
    <recommendedName>
        <fullName evidence="1">Large ribosomal subunit protein uL3</fullName>
    </recommendedName>
    <alternativeName>
        <fullName evidence="2">50S ribosomal protein L3</fullName>
    </alternativeName>
</protein>
<gene>
    <name evidence="1" type="primary">rpl3</name>
    <name type="ordered locus">Pisl_1796</name>
</gene>
<proteinExistence type="inferred from homology"/>